<keyword id="KW-0150">Chloroplast</keyword>
<keyword id="KW-0472">Membrane</keyword>
<keyword id="KW-0602">Photosynthesis</keyword>
<keyword id="KW-0603">Photosystem I</keyword>
<keyword id="KW-0934">Plastid</keyword>
<keyword id="KW-0793">Thylakoid</keyword>
<keyword id="KW-0809">Transit peptide</keyword>
<keyword id="KW-0812">Transmembrane</keyword>
<keyword id="KW-1133">Transmembrane helix</keyword>
<feature type="transit peptide" description="Chloroplast" evidence="1">
    <location>
        <begin position="1"/>
        <end position="15"/>
    </location>
</feature>
<feature type="chain" id="PRO_0000029391" description="Photosystem I reaction center subunit V, chloroplastic">
    <location>
        <begin position="16"/>
        <end position="112"/>
    </location>
</feature>
<feature type="transmembrane region" description="Helical" evidence="1">
    <location>
        <begin position="20"/>
        <end position="40"/>
    </location>
</feature>
<feature type="transmembrane region" description="Helical" evidence="1">
    <location>
        <begin position="81"/>
        <end position="101"/>
    </location>
</feature>
<proteinExistence type="inferred from homology"/>
<accession>Q9SPM4</accession>
<dbReference type="EMBL" id="AF157017">
    <property type="protein sequence ID" value="AAD46189.1"/>
    <property type="molecule type" value="mRNA"/>
</dbReference>
<dbReference type="SMR" id="Q9SPM4"/>
<dbReference type="GO" id="GO:0009535">
    <property type="term" value="C:chloroplast thylakoid membrane"/>
    <property type="evidence" value="ECO:0007669"/>
    <property type="project" value="UniProtKB-SubCell"/>
</dbReference>
<dbReference type="GO" id="GO:0009522">
    <property type="term" value="C:photosystem I"/>
    <property type="evidence" value="ECO:0007669"/>
    <property type="project" value="UniProtKB-KW"/>
</dbReference>
<dbReference type="GO" id="GO:0015979">
    <property type="term" value="P:photosynthesis"/>
    <property type="evidence" value="ECO:0007669"/>
    <property type="project" value="UniProtKB-KW"/>
</dbReference>
<dbReference type="Gene3D" id="1.10.286.40">
    <property type="entry name" value="Chlorophyll a-b binding protein like"/>
    <property type="match status" value="1"/>
</dbReference>
<dbReference type="InterPro" id="IPR017494">
    <property type="entry name" value="PSI_PsaG"/>
</dbReference>
<dbReference type="InterPro" id="IPR000549">
    <property type="entry name" value="PSI_PsaG/PsaK"/>
</dbReference>
<dbReference type="InterPro" id="IPR023618">
    <property type="entry name" value="PSI_PsaG/PsaK_dom"/>
</dbReference>
<dbReference type="InterPro" id="IPR016370">
    <property type="entry name" value="PSI_PsaG/PsaK_pln"/>
</dbReference>
<dbReference type="NCBIfam" id="TIGR03051">
    <property type="entry name" value="PS_I_psaG_plant"/>
    <property type="match status" value="1"/>
</dbReference>
<dbReference type="PANTHER" id="PTHR34195:SF1">
    <property type="entry name" value="PHOTOSYSTEM I REACTION CENTER SUBUNIT V, CHLOROPLASTIC"/>
    <property type="match status" value="1"/>
</dbReference>
<dbReference type="PANTHER" id="PTHR34195">
    <property type="entry name" value="PHOTOSYSTEM I REACTION CENTER SUBUNIT V, CHLOROPLASTIC-RELATED"/>
    <property type="match status" value="1"/>
</dbReference>
<dbReference type="Pfam" id="PF01241">
    <property type="entry name" value="PSI_PSAK"/>
    <property type="match status" value="1"/>
</dbReference>
<dbReference type="PROSITE" id="PS01026">
    <property type="entry name" value="PHOTOSYSTEM_I_PSAGK"/>
    <property type="match status" value="1"/>
</dbReference>
<reference key="1">
    <citation type="online journal article" date="1999" name="Plant Gene Register">
        <title>Subunit V (PsaG) of the photosystem I reaction center from desiccated Tortula ruralis.</title>
        <authorList>
            <person name="Wood A.J."/>
            <person name="Duff R.J."/>
        </authorList>
        <locator>PGR99-140</locator>
    </citation>
    <scope>NUCLEOTIDE SEQUENCE [MRNA]</scope>
</reference>
<gene>
    <name type="primary">PSAG</name>
</gene>
<sequence length="112" mass="12046">MTAIAKSAAKVTCDGANTSFIISASTAALLALGRFVFLPFQRSMVSRHGLPEQNGVPTTRRVTAVRRRWWSMLKTNDPAGFTLVDVLAWGALGHAVGFFILATATNGYNGFQ</sequence>
<protein>
    <recommendedName>
        <fullName>Photosystem I reaction center subunit V, chloroplastic</fullName>
    </recommendedName>
    <alternativeName>
        <fullName>PSI-G</fullName>
    </alternativeName>
</protein>
<name>PSAG_SYNRU</name>
<organism>
    <name type="scientific">Syntrichia ruralis</name>
    <name type="common">Great hairy screw-moss</name>
    <name type="synonym">Tortula ruralis</name>
    <dbReference type="NCBI Taxonomy" id="38588"/>
    <lineage>
        <taxon>Eukaryota</taxon>
        <taxon>Viridiplantae</taxon>
        <taxon>Streptophyta</taxon>
        <taxon>Embryophyta</taxon>
        <taxon>Bryophyta</taxon>
        <taxon>Bryophytina</taxon>
        <taxon>Bryopsida</taxon>
        <taxon>Dicranidae</taxon>
        <taxon>Pottiales</taxon>
        <taxon>Pottiaceae</taxon>
        <taxon>Syntrichia</taxon>
    </lineage>
</organism>
<evidence type="ECO:0000255" key="1"/>
<evidence type="ECO:0000305" key="2"/>
<comment type="function">
    <text>Not yet known.</text>
</comment>
<comment type="subcellular location">
    <subcellularLocation>
        <location evidence="2">Plastid</location>
        <location evidence="2">Chloroplast thylakoid membrane</location>
        <topology evidence="2">Multi-pass membrane protein</topology>
    </subcellularLocation>
</comment>
<comment type="similarity">
    <text evidence="2">Belongs to the PsaG/PsaK family.</text>
</comment>